<organism>
    <name type="scientific">Bifidobacterium animalis subsp. lactis (strain AD011)</name>
    <dbReference type="NCBI Taxonomy" id="442563"/>
    <lineage>
        <taxon>Bacteria</taxon>
        <taxon>Bacillati</taxon>
        <taxon>Actinomycetota</taxon>
        <taxon>Actinomycetes</taxon>
        <taxon>Bifidobacteriales</taxon>
        <taxon>Bifidobacteriaceae</taxon>
        <taxon>Bifidobacterium</taxon>
    </lineage>
</organism>
<feature type="chain" id="PRO_1000118794" description="Holo-[acyl-carrier-protein] synthase">
    <location>
        <begin position="1"/>
        <end position="147"/>
    </location>
</feature>
<feature type="binding site" evidence="1">
    <location>
        <position position="7"/>
    </location>
    <ligand>
        <name>Mg(2+)</name>
        <dbReference type="ChEBI" id="CHEBI:18420"/>
    </ligand>
</feature>
<feature type="binding site" evidence="1">
    <location>
        <position position="60"/>
    </location>
    <ligand>
        <name>Mg(2+)</name>
        <dbReference type="ChEBI" id="CHEBI:18420"/>
    </ligand>
</feature>
<dbReference type="EC" id="2.7.8.7" evidence="1"/>
<dbReference type="EMBL" id="CP001213">
    <property type="protein sequence ID" value="ACL28605.1"/>
    <property type="molecule type" value="Genomic_DNA"/>
</dbReference>
<dbReference type="SMR" id="B8DVV4"/>
<dbReference type="STRING" id="442563.BLA_0303"/>
<dbReference type="KEGG" id="bla:BLA_0303"/>
<dbReference type="PATRIC" id="fig|442563.4.peg.325"/>
<dbReference type="HOGENOM" id="CLU_089696_2_0_11"/>
<dbReference type="Proteomes" id="UP000002456">
    <property type="component" value="Chromosome"/>
</dbReference>
<dbReference type="GO" id="GO:0005737">
    <property type="term" value="C:cytoplasm"/>
    <property type="evidence" value="ECO:0007669"/>
    <property type="project" value="UniProtKB-SubCell"/>
</dbReference>
<dbReference type="GO" id="GO:0008897">
    <property type="term" value="F:holo-[acyl-carrier-protein] synthase activity"/>
    <property type="evidence" value="ECO:0007669"/>
    <property type="project" value="UniProtKB-UniRule"/>
</dbReference>
<dbReference type="GO" id="GO:0000287">
    <property type="term" value="F:magnesium ion binding"/>
    <property type="evidence" value="ECO:0007669"/>
    <property type="project" value="UniProtKB-UniRule"/>
</dbReference>
<dbReference type="GO" id="GO:0006633">
    <property type="term" value="P:fatty acid biosynthetic process"/>
    <property type="evidence" value="ECO:0007669"/>
    <property type="project" value="UniProtKB-UniRule"/>
</dbReference>
<dbReference type="Gene3D" id="3.90.470.20">
    <property type="entry name" value="4'-phosphopantetheinyl transferase domain"/>
    <property type="match status" value="1"/>
</dbReference>
<dbReference type="HAMAP" id="MF_00101">
    <property type="entry name" value="AcpS"/>
    <property type="match status" value="1"/>
</dbReference>
<dbReference type="InterPro" id="IPR008278">
    <property type="entry name" value="4-PPantetheinyl_Trfase_dom"/>
</dbReference>
<dbReference type="InterPro" id="IPR037143">
    <property type="entry name" value="4-PPantetheinyl_Trfase_dom_sf"/>
</dbReference>
<dbReference type="InterPro" id="IPR002582">
    <property type="entry name" value="ACPS"/>
</dbReference>
<dbReference type="InterPro" id="IPR004568">
    <property type="entry name" value="Ppantetheine-prot_Trfase_dom"/>
</dbReference>
<dbReference type="NCBIfam" id="TIGR00556">
    <property type="entry name" value="pantethn_trn"/>
    <property type="match status" value="1"/>
</dbReference>
<dbReference type="Pfam" id="PF01648">
    <property type="entry name" value="ACPS"/>
    <property type="match status" value="1"/>
</dbReference>
<dbReference type="SUPFAM" id="SSF56214">
    <property type="entry name" value="4'-phosphopantetheinyl transferase"/>
    <property type="match status" value="1"/>
</dbReference>
<gene>
    <name evidence="1" type="primary">acpS</name>
    <name type="ordered locus">BLA_0303</name>
</gene>
<evidence type="ECO:0000255" key="1">
    <source>
        <dbReference type="HAMAP-Rule" id="MF_00101"/>
    </source>
</evidence>
<proteinExistence type="inferred from homology"/>
<reference key="1">
    <citation type="journal article" date="2009" name="J. Bacteriol.">
        <title>Genome sequence of the probiotic bacterium Bifidobacterium animalis subsp. lactis AD011.</title>
        <authorList>
            <person name="Kim J.F."/>
            <person name="Jeong H."/>
            <person name="Yu D.S."/>
            <person name="Choi S.-H."/>
            <person name="Hur C.-G."/>
            <person name="Park M.-S."/>
            <person name="Yoon S.H."/>
            <person name="Kim D.-W."/>
            <person name="Ji G.E."/>
            <person name="Park H.-S."/>
            <person name="Oh T.K."/>
        </authorList>
    </citation>
    <scope>NUCLEOTIDE SEQUENCE [LARGE SCALE GENOMIC DNA]</scope>
    <source>
        <strain>AD011</strain>
    </source>
</reference>
<sequence>MLGLGHDVVDVGAFAEQLEMPGTRMTRLFSARECRQASLRASIKHDGEALHLAAKWAAKESVVKAWCEALVGRGITERPYTVDDTPWSRIEIVDDATGCPRVVMAAEVHVELCRSLAVTESAEPVWHVSISHDGGIASAVAVLDMRE</sequence>
<name>ACPS_BIFA0</name>
<comment type="function">
    <text evidence="1">Transfers the 4'-phosphopantetheine moiety from coenzyme A to a Ser of acyl-carrier-protein.</text>
</comment>
<comment type="catalytic activity">
    <reaction evidence="1">
        <text>apo-[ACP] + CoA = holo-[ACP] + adenosine 3',5'-bisphosphate + H(+)</text>
        <dbReference type="Rhea" id="RHEA:12068"/>
        <dbReference type="Rhea" id="RHEA-COMP:9685"/>
        <dbReference type="Rhea" id="RHEA-COMP:9690"/>
        <dbReference type="ChEBI" id="CHEBI:15378"/>
        <dbReference type="ChEBI" id="CHEBI:29999"/>
        <dbReference type="ChEBI" id="CHEBI:57287"/>
        <dbReference type="ChEBI" id="CHEBI:58343"/>
        <dbReference type="ChEBI" id="CHEBI:64479"/>
        <dbReference type="EC" id="2.7.8.7"/>
    </reaction>
</comment>
<comment type="cofactor">
    <cofactor evidence="1">
        <name>Mg(2+)</name>
        <dbReference type="ChEBI" id="CHEBI:18420"/>
    </cofactor>
</comment>
<comment type="subcellular location">
    <subcellularLocation>
        <location evidence="1">Cytoplasm</location>
    </subcellularLocation>
</comment>
<comment type="similarity">
    <text evidence="1">Belongs to the P-Pant transferase superfamily. AcpS family.</text>
</comment>
<protein>
    <recommendedName>
        <fullName evidence="1">Holo-[acyl-carrier-protein] synthase</fullName>
        <shortName evidence="1">Holo-ACP synthase</shortName>
        <ecNumber evidence="1">2.7.8.7</ecNumber>
    </recommendedName>
    <alternativeName>
        <fullName evidence="1">4'-phosphopantetheinyl transferase AcpS</fullName>
    </alternativeName>
</protein>
<accession>B8DVV4</accession>
<keyword id="KW-0963">Cytoplasm</keyword>
<keyword id="KW-0275">Fatty acid biosynthesis</keyword>
<keyword id="KW-0276">Fatty acid metabolism</keyword>
<keyword id="KW-0444">Lipid biosynthesis</keyword>
<keyword id="KW-0443">Lipid metabolism</keyword>
<keyword id="KW-0460">Magnesium</keyword>
<keyword id="KW-0479">Metal-binding</keyword>
<keyword id="KW-1185">Reference proteome</keyword>
<keyword id="KW-0808">Transferase</keyword>